<feature type="chain" id="PRO_0000296929" description="Putative manganese efflux pump MntP">
    <location>
        <begin position="1"/>
        <end position="183"/>
    </location>
</feature>
<feature type="transmembrane region" description="Helical" evidence="1">
    <location>
        <begin position="8"/>
        <end position="28"/>
    </location>
</feature>
<feature type="transmembrane region" description="Helical" evidence="1">
    <location>
        <begin position="39"/>
        <end position="59"/>
    </location>
</feature>
<feature type="transmembrane region" description="Helical" evidence="1">
    <location>
        <begin position="68"/>
        <end position="88"/>
    </location>
</feature>
<feature type="transmembrane region" description="Helical" evidence="1">
    <location>
        <begin position="108"/>
        <end position="128"/>
    </location>
</feature>
<feature type="transmembrane region" description="Helical" evidence="1">
    <location>
        <begin position="133"/>
        <end position="153"/>
    </location>
</feature>
<feature type="transmembrane region" description="Helical" evidence="1">
    <location>
        <begin position="162"/>
        <end position="182"/>
    </location>
</feature>
<keyword id="KW-1003">Cell membrane</keyword>
<keyword id="KW-0406">Ion transport</keyword>
<keyword id="KW-0464">Manganese</keyword>
<keyword id="KW-0472">Membrane</keyword>
<keyword id="KW-0812">Transmembrane</keyword>
<keyword id="KW-1133">Transmembrane helix</keyword>
<keyword id="KW-0813">Transport</keyword>
<comment type="function">
    <text evidence="1">Probably functions as a manganese efflux pump.</text>
</comment>
<comment type="subcellular location">
    <subcellularLocation>
        <location evidence="1">Cell membrane</location>
        <topology evidence="1">Multi-pass membrane protein</topology>
    </subcellularLocation>
</comment>
<comment type="similarity">
    <text evidence="1">Belongs to the MntP (TC 9.B.29) family.</text>
</comment>
<dbReference type="EMBL" id="CP000557">
    <property type="protein sequence ID" value="ABO68658.1"/>
    <property type="molecule type" value="Genomic_DNA"/>
</dbReference>
<dbReference type="RefSeq" id="WP_008880708.1">
    <property type="nucleotide sequence ID" value="NC_009328.1"/>
</dbReference>
<dbReference type="GeneID" id="87622571"/>
<dbReference type="KEGG" id="gtn:GTNG_3319"/>
<dbReference type="eggNOG" id="COG1971">
    <property type="taxonomic scope" value="Bacteria"/>
</dbReference>
<dbReference type="HOGENOM" id="CLU_096410_1_0_9"/>
<dbReference type="Proteomes" id="UP000001578">
    <property type="component" value="Chromosome"/>
</dbReference>
<dbReference type="GO" id="GO:0005886">
    <property type="term" value="C:plasma membrane"/>
    <property type="evidence" value="ECO:0007669"/>
    <property type="project" value="UniProtKB-SubCell"/>
</dbReference>
<dbReference type="GO" id="GO:0005384">
    <property type="term" value="F:manganese ion transmembrane transporter activity"/>
    <property type="evidence" value="ECO:0007669"/>
    <property type="project" value="UniProtKB-UniRule"/>
</dbReference>
<dbReference type="HAMAP" id="MF_01521">
    <property type="entry name" value="MntP_pump"/>
    <property type="match status" value="1"/>
</dbReference>
<dbReference type="InterPro" id="IPR003810">
    <property type="entry name" value="Mntp/YtaF"/>
</dbReference>
<dbReference type="InterPro" id="IPR022929">
    <property type="entry name" value="Put_MntP"/>
</dbReference>
<dbReference type="PANTHER" id="PTHR35529">
    <property type="entry name" value="MANGANESE EFFLUX PUMP MNTP-RELATED"/>
    <property type="match status" value="1"/>
</dbReference>
<dbReference type="PANTHER" id="PTHR35529:SF1">
    <property type="entry name" value="MANGANESE EFFLUX PUMP MNTP-RELATED"/>
    <property type="match status" value="1"/>
</dbReference>
<dbReference type="Pfam" id="PF02659">
    <property type="entry name" value="Mntp"/>
    <property type="match status" value="1"/>
</dbReference>
<reference key="1">
    <citation type="journal article" date="2007" name="Proc. Natl. Acad. Sci. U.S.A.">
        <title>Genome and proteome of long-chain alkane degrading Geobacillus thermodenitrificans NG80-2 isolated from a deep-subsurface oil reservoir.</title>
        <authorList>
            <person name="Feng L."/>
            <person name="Wang W."/>
            <person name="Cheng J."/>
            <person name="Ren Y."/>
            <person name="Zhao G."/>
            <person name="Gao C."/>
            <person name="Tang Y."/>
            <person name="Liu X."/>
            <person name="Han W."/>
            <person name="Peng X."/>
            <person name="Liu R."/>
            <person name="Wang L."/>
        </authorList>
    </citation>
    <scope>NUCLEOTIDE SEQUENCE [LARGE SCALE GENOMIC DNA]</scope>
    <source>
        <strain>NG80-2</strain>
    </source>
</reference>
<organism>
    <name type="scientific">Geobacillus thermodenitrificans (strain NG80-2)</name>
    <dbReference type="NCBI Taxonomy" id="420246"/>
    <lineage>
        <taxon>Bacteria</taxon>
        <taxon>Bacillati</taxon>
        <taxon>Bacillota</taxon>
        <taxon>Bacilli</taxon>
        <taxon>Bacillales</taxon>
        <taxon>Anoxybacillaceae</taxon>
        <taxon>Geobacillus</taxon>
    </lineage>
</organism>
<protein>
    <recommendedName>
        <fullName evidence="1">Putative manganese efflux pump MntP</fullName>
    </recommendedName>
</protein>
<proteinExistence type="inferred from homology"/>
<accession>A4ITK4</accession>
<name>MNTP_GEOTN</name>
<sequence length="183" mass="19670">MGALIGEMIALSLMALALGMDAFSVALGMGLLRLRLRQIFYIGLTIGLFHIFMPLVGMAVGRFLSREFGSIATYAGGVLLLWLGGQMIVTSFQQEEGTSFLPHGAGLLFFAFSVSLDSFSVGLSLGIFGARTMATILLFGLFSTVLTWIGLLVGRHFRQWLGSYSEALGGSILLVFGLKLLFS</sequence>
<evidence type="ECO:0000255" key="1">
    <source>
        <dbReference type="HAMAP-Rule" id="MF_01521"/>
    </source>
</evidence>
<gene>
    <name evidence="1" type="primary">mntP</name>
    <name type="ordered locus">GTNG_3319</name>
</gene>